<accession>A2BID7</accession>
<accession>Q1LV64</accession>
<feature type="chain" id="PRO_0000363965" description="PR domain zinc finger protein 10">
    <location>
        <begin position="1"/>
        <end position="1121"/>
    </location>
</feature>
<feature type="domain" description="SET" evidence="4">
    <location>
        <begin position="173"/>
        <end position="290"/>
    </location>
</feature>
<feature type="zinc finger region" description="C2H2-type 1" evidence="3">
    <location>
        <begin position="319"/>
        <end position="341"/>
    </location>
</feature>
<feature type="zinc finger region" description="C2H2-type 2" evidence="3">
    <location>
        <begin position="500"/>
        <end position="522"/>
    </location>
</feature>
<feature type="zinc finger region" description="C2H2-type 3" evidence="3">
    <location>
        <begin position="529"/>
        <end position="551"/>
    </location>
</feature>
<feature type="zinc finger region" description="C2H2-type 4" evidence="3">
    <location>
        <begin position="557"/>
        <end position="579"/>
    </location>
</feature>
<feature type="zinc finger region" description="C2H2-type 5" evidence="3">
    <location>
        <begin position="585"/>
        <end position="608"/>
    </location>
</feature>
<feature type="zinc finger region" description="C2H2-type 6" evidence="3">
    <location>
        <begin position="613"/>
        <end position="635"/>
    </location>
</feature>
<feature type="zinc finger region" description="C2H2-type 7" evidence="3">
    <location>
        <begin position="641"/>
        <end position="664"/>
    </location>
</feature>
<feature type="zinc finger region" description="C2H2-type 8" evidence="3">
    <location>
        <begin position="696"/>
        <end position="719"/>
    </location>
</feature>
<feature type="zinc finger region" description="C2H2-type 9" evidence="3">
    <location>
        <begin position="741"/>
        <end position="764"/>
    </location>
</feature>
<feature type="zinc finger region" description="C2H2-type 10" evidence="3">
    <location>
        <begin position="803"/>
        <end position="826"/>
    </location>
</feature>
<feature type="region of interest" description="Disordered" evidence="5">
    <location>
        <begin position="1"/>
        <end position="24"/>
    </location>
</feature>
<feature type="region of interest" description="Disordered" evidence="5">
    <location>
        <begin position="92"/>
        <end position="125"/>
    </location>
</feature>
<feature type="region of interest" description="N-terminal PR domain; essential for transcriptional activation" evidence="1">
    <location>
        <begin position="192"/>
        <end position="295"/>
    </location>
</feature>
<feature type="region of interest" description="Disordered" evidence="5">
    <location>
        <begin position="350"/>
        <end position="387"/>
    </location>
</feature>
<feature type="region of interest" description="Disordered" evidence="5">
    <location>
        <begin position="419"/>
        <end position="473"/>
    </location>
</feature>
<feature type="region of interest" description="C-terminal glutamine-rich region; essential for transcriptional activation" evidence="1">
    <location>
        <begin position="871"/>
        <end position="1101"/>
    </location>
</feature>
<feature type="region of interest" description="Disordered" evidence="5">
    <location>
        <begin position="1077"/>
        <end position="1097"/>
    </location>
</feature>
<feature type="compositionally biased region" description="Acidic residues" evidence="5">
    <location>
        <begin position="106"/>
        <end position="124"/>
    </location>
</feature>
<feature type="compositionally biased region" description="Basic residues" evidence="5">
    <location>
        <begin position="351"/>
        <end position="374"/>
    </location>
</feature>
<feature type="sequence conflict" description="In Ref. 1; CAK04147." evidence="6" ref="1">
    <original>E</original>
    <variation>D</variation>
    <location>
        <position position="401"/>
    </location>
</feature>
<name>PRD10_DANRE</name>
<dbReference type="EMBL" id="BX908391">
    <property type="protein sequence ID" value="CAK04147.1"/>
    <property type="molecule type" value="Genomic_DNA"/>
</dbReference>
<dbReference type="EMBL" id="BX908399">
    <property type="protein sequence ID" value="CAM13007.1"/>
    <property type="status" value="ALT_SEQ"/>
    <property type="molecule type" value="Genomic_DNA"/>
</dbReference>
<dbReference type="SMR" id="A2BID7"/>
<dbReference type="FunCoup" id="A2BID7">
    <property type="interactions" value="1062"/>
</dbReference>
<dbReference type="STRING" id="7955.ENSDARP00000131406"/>
<dbReference type="AGR" id="ZFIN:ZDB-GENE-050419-74"/>
<dbReference type="ZFIN" id="ZDB-GENE-050419-74">
    <property type="gene designation" value="prdm10"/>
</dbReference>
<dbReference type="InParanoid" id="A2BID7"/>
<dbReference type="PhylomeDB" id="A2BID7"/>
<dbReference type="PRO" id="PR:A2BID7"/>
<dbReference type="Proteomes" id="UP000000437">
    <property type="component" value="Unplaced"/>
</dbReference>
<dbReference type="GO" id="GO:0000785">
    <property type="term" value="C:chromatin"/>
    <property type="evidence" value="ECO:0000250"/>
    <property type="project" value="UniProtKB"/>
</dbReference>
<dbReference type="GO" id="GO:0005634">
    <property type="term" value="C:nucleus"/>
    <property type="evidence" value="ECO:0000250"/>
    <property type="project" value="UniProtKB"/>
</dbReference>
<dbReference type="GO" id="GO:0003677">
    <property type="term" value="F:DNA binding"/>
    <property type="evidence" value="ECO:0007669"/>
    <property type="project" value="UniProtKB-KW"/>
</dbReference>
<dbReference type="GO" id="GO:0003700">
    <property type="term" value="F:DNA-binding transcription factor activity"/>
    <property type="evidence" value="ECO:0000250"/>
    <property type="project" value="UniProtKB"/>
</dbReference>
<dbReference type="GO" id="GO:0008168">
    <property type="term" value="F:methyltransferase activity"/>
    <property type="evidence" value="ECO:0007669"/>
    <property type="project" value="UniProtKB-KW"/>
</dbReference>
<dbReference type="GO" id="GO:0008270">
    <property type="term" value="F:zinc ion binding"/>
    <property type="evidence" value="ECO:0007669"/>
    <property type="project" value="UniProtKB-KW"/>
</dbReference>
<dbReference type="GO" id="GO:0032259">
    <property type="term" value="P:methylation"/>
    <property type="evidence" value="ECO:0007669"/>
    <property type="project" value="UniProtKB-KW"/>
</dbReference>
<dbReference type="GO" id="GO:0045893">
    <property type="term" value="P:positive regulation of DNA-templated transcription"/>
    <property type="evidence" value="ECO:0000250"/>
    <property type="project" value="UniProtKB"/>
</dbReference>
<dbReference type="GO" id="GO:0045944">
    <property type="term" value="P:positive regulation of transcription by RNA polymerase II"/>
    <property type="evidence" value="ECO:0000318"/>
    <property type="project" value="GO_Central"/>
</dbReference>
<dbReference type="CDD" id="cd19194">
    <property type="entry name" value="PR-SET_PRDM10"/>
    <property type="match status" value="1"/>
</dbReference>
<dbReference type="FunFam" id="2.170.270.10:FF:000007">
    <property type="entry name" value="PR domain zinc finger protein 10"/>
    <property type="match status" value="1"/>
</dbReference>
<dbReference type="FunFam" id="3.30.160.60:FF:000287">
    <property type="entry name" value="PR domain zinc finger protein 10"/>
    <property type="match status" value="1"/>
</dbReference>
<dbReference type="FunFam" id="3.30.160.60:FF:000300">
    <property type="entry name" value="PR domain zinc finger protein 10"/>
    <property type="match status" value="1"/>
</dbReference>
<dbReference type="FunFam" id="3.30.160.60:FF:000347">
    <property type="entry name" value="PR domain zinc finger protein 10"/>
    <property type="match status" value="1"/>
</dbReference>
<dbReference type="FunFam" id="3.30.160.60:FF:000411">
    <property type="entry name" value="PR domain zinc finger protein 10"/>
    <property type="match status" value="1"/>
</dbReference>
<dbReference type="FunFam" id="3.30.160.60:FF:000413">
    <property type="entry name" value="PR domain zinc finger protein 10"/>
    <property type="match status" value="1"/>
</dbReference>
<dbReference type="Gene3D" id="3.30.160.60">
    <property type="entry name" value="Classic Zinc Finger"/>
    <property type="match status" value="6"/>
</dbReference>
<dbReference type="Gene3D" id="2.170.270.10">
    <property type="entry name" value="SET domain"/>
    <property type="match status" value="1"/>
</dbReference>
<dbReference type="InterPro" id="IPR050636">
    <property type="entry name" value="C2H2-ZF_domain-containing"/>
</dbReference>
<dbReference type="InterPro" id="IPR044403">
    <property type="entry name" value="PRDM10_PR/SET"/>
</dbReference>
<dbReference type="InterPro" id="IPR001214">
    <property type="entry name" value="SET_dom"/>
</dbReference>
<dbReference type="InterPro" id="IPR046341">
    <property type="entry name" value="SET_dom_sf"/>
</dbReference>
<dbReference type="InterPro" id="IPR036236">
    <property type="entry name" value="Znf_C2H2_sf"/>
</dbReference>
<dbReference type="InterPro" id="IPR013087">
    <property type="entry name" value="Znf_C2H2_type"/>
</dbReference>
<dbReference type="PANTHER" id="PTHR47772:SF13">
    <property type="entry name" value="GASTRULA ZINC FINGER PROTEIN XLCGF49.1-LIKE-RELATED"/>
    <property type="match status" value="1"/>
</dbReference>
<dbReference type="PANTHER" id="PTHR47772">
    <property type="entry name" value="ZINC FINGER PROTEIN 200"/>
    <property type="match status" value="1"/>
</dbReference>
<dbReference type="Pfam" id="PF21549">
    <property type="entry name" value="PRDM2_PR"/>
    <property type="match status" value="1"/>
</dbReference>
<dbReference type="Pfam" id="PF00096">
    <property type="entry name" value="zf-C2H2"/>
    <property type="match status" value="5"/>
</dbReference>
<dbReference type="SMART" id="SM00355">
    <property type="entry name" value="ZnF_C2H2"/>
    <property type="match status" value="10"/>
</dbReference>
<dbReference type="SUPFAM" id="SSF57667">
    <property type="entry name" value="beta-beta-alpha zinc fingers"/>
    <property type="match status" value="3"/>
</dbReference>
<dbReference type="PROSITE" id="PS50280">
    <property type="entry name" value="SET"/>
    <property type="match status" value="1"/>
</dbReference>
<dbReference type="PROSITE" id="PS00028">
    <property type="entry name" value="ZINC_FINGER_C2H2_1"/>
    <property type="match status" value="10"/>
</dbReference>
<dbReference type="PROSITE" id="PS50157">
    <property type="entry name" value="ZINC_FINGER_C2H2_2"/>
    <property type="match status" value="8"/>
</dbReference>
<reference key="1">
    <citation type="journal article" date="2013" name="Nature">
        <title>The zebrafish reference genome sequence and its relationship to the human genome.</title>
        <authorList>
            <person name="Howe K."/>
            <person name="Clark M.D."/>
            <person name="Torroja C.F."/>
            <person name="Torrance J."/>
            <person name="Berthelot C."/>
            <person name="Muffato M."/>
            <person name="Collins J.E."/>
            <person name="Humphray S."/>
            <person name="McLaren K."/>
            <person name="Matthews L."/>
            <person name="McLaren S."/>
            <person name="Sealy I."/>
            <person name="Caccamo M."/>
            <person name="Churcher C."/>
            <person name="Scott C."/>
            <person name="Barrett J.C."/>
            <person name="Koch R."/>
            <person name="Rauch G.J."/>
            <person name="White S."/>
            <person name="Chow W."/>
            <person name="Kilian B."/>
            <person name="Quintais L.T."/>
            <person name="Guerra-Assuncao J.A."/>
            <person name="Zhou Y."/>
            <person name="Gu Y."/>
            <person name="Yen J."/>
            <person name="Vogel J.H."/>
            <person name="Eyre T."/>
            <person name="Redmond S."/>
            <person name="Banerjee R."/>
            <person name="Chi J."/>
            <person name="Fu B."/>
            <person name="Langley E."/>
            <person name="Maguire S.F."/>
            <person name="Laird G.K."/>
            <person name="Lloyd D."/>
            <person name="Kenyon E."/>
            <person name="Donaldson S."/>
            <person name="Sehra H."/>
            <person name="Almeida-King J."/>
            <person name="Loveland J."/>
            <person name="Trevanion S."/>
            <person name="Jones M."/>
            <person name="Quail M."/>
            <person name="Willey D."/>
            <person name="Hunt A."/>
            <person name="Burton J."/>
            <person name="Sims S."/>
            <person name="McLay K."/>
            <person name="Plumb B."/>
            <person name="Davis J."/>
            <person name="Clee C."/>
            <person name="Oliver K."/>
            <person name="Clark R."/>
            <person name="Riddle C."/>
            <person name="Elliot D."/>
            <person name="Threadgold G."/>
            <person name="Harden G."/>
            <person name="Ware D."/>
            <person name="Begum S."/>
            <person name="Mortimore B."/>
            <person name="Kerry G."/>
            <person name="Heath P."/>
            <person name="Phillimore B."/>
            <person name="Tracey A."/>
            <person name="Corby N."/>
            <person name="Dunn M."/>
            <person name="Johnson C."/>
            <person name="Wood J."/>
            <person name="Clark S."/>
            <person name="Pelan S."/>
            <person name="Griffiths G."/>
            <person name="Smith M."/>
            <person name="Glithero R."/>
            <person name="Howden P."/>
            <person name="Barker N."/>
            <person name="Lloyd C."/>
            <person name="Stevens C."/>
            <person name="Harley J."/>
            <person name="Holt K."/>
            <person name="Panagiotidis G."/>
            <person name="Lovell J."/>
            <person name="Beasley H."/>
            <person name="Henderson C."/>
            <person name="Gordon D."/>
            <person name="Auger K."/>
            <person name="Wright D."/>
            <person name="Collins J."/>
            <person name="Raisen C."/>
            <person name="Dyer L."/>
            <person name="Leung K."/>
            <person name="Robertson L."/>
            <person name="Ambridge K."/>
            <person name="Leongamornlert D."/>
            <person name="McGuire S."/>
            <person name="Gilderthorp R."/>
            <person name="Griffiths C."/>
            <person name="Manthravadi D."/>
            <person name="Nichol S."/>
            <person name="Barker G."/>
            <person name="Whitehead S."/>
            <person name="Kay M."/>
            <person name="Brown J."/>
            <person name="Murnane C."/>
            <person name="Gray E."/>
            <person name="Humphries M."/>
            <person name="Sycamore N."/>
            <person name="Barker D."/>
            <person name="Saunders D."/>
            <person name="Wallis J."/>
            <person name="Babbage A."/>
            <person name="Hammond S."/>
            <person name="Mashreghi-Mohammadi M."/>
            <person name="Barr L."/>
            <person name="Martin S."/>
            <person name="Wray P."/>
            <person name="Ellington A."/>
            <person name="Matthews N."/>
            <person name="Ellwood M."/>
            <person name="Woodmansey R."/>
            <person name="Clark G."/>
            <person name="Cooper J."/>
            <person name="Tromans A."/>
            <person name="Grafham D."/>
            <person name="Skuce C."/>
            <person name="Pandian R."/>
            <person name="Andrews R."/>
            <person name="Harrison E."/>
            <person name="Kimberley A."/>
            <person name="Garnett J."/>
            <person name="Fosker N."/>
            <person name="Hall R."/>
            <person name="Garner P."/>
            <person name="Kelly D."/>
            <person name="Bird C."/>
            <person name="Palmer S."/>
            <person name="Gehring I."/>
            <person name="Berger A."/>
            <person name="Dooley C.M."/>
            <person name="Ersan-Urun Z."/>
            <person name="Eser C."/>
            <person name="Geiger H."/>
            <person name="Geisler M."/>
            <person name="Karotki L."/>
            <person name="Kirn A."/>
            <person name="Konantz J."/>
            <person name="Konantz M."/>
            <person name="Oberlander M."/>
            <person name="Rudolph-Geiger S."/>
            <person name="Teucke M."/>
            <person name="Lanz C."/>
            <person name="Raddatz G."/>
            <person name="Osoegawa K."/>
            <person name="Zhu B."/>
            <person name="Rapp A."/>
            <person name="Widaa S."/>
            <person name="Langford C."/>
            <person name="Yang F."/>
            <person name="Schuster S.C."/>
            <person name="Carter N.P."/>
            <person name="Harrow J."/>
            <person name="Ning Z."/>
            <person name="Herrero J."/>
            <person name="Searle S.M."/>
            <person name="Enright A."/>
            <person name="Geisler R."/>
            <person name="Plasterk R.H."/>
            <person name="Lee C."/>
            <person name="Westerfield M."/>
            <person name="de Jong P.J."/>
            <person name="Zon L.I."/>
            <person name="Postlethwait J.H."/>
            <person name="Nusslein-Volhard C."/>
            <person name="Hubbard T.J."/>
            <person name="Roest Crollius H."/>
            <person name="Rogers J."/>
            <person name="Stemple D.L."/>
        </authorList>
    </citation>
    <scope>NUCLEOTIDE SEQUENCE [LARGE SCALE GENOMIC DNA]</scope>
    <source>
        <strain>Tuebingen</strain>
    </source>
</reference>
<proteinExistence type="inferred from homology"/>
<comment type="function">
    <text evidence="1 2">Transcriptional activator, essential for early embryonic development and survival of embryonic stem cells (ESCs). Supports cell growth and survival during early development by transcriptionally activating the expression of the translation initiation factor EIF3B, to sustain global translation. Activates the transcription of FLNC.</text>
</comment>
<comment type="subcellular location">
    <subcellularLocation>
        <location evidence="2">Nucleus</location>
    </subcellularLocation>
</comment>
<comment type="domain">
    <text>The SET domain is degenerated, suggesting that it has lost methyltransferase activity.</text>
</comment>
<comment type="similarity">
    <text evidence="4">Belongs to the class V-like SAM-binding methyltransferase superfamily.</text>
</comment>
<comment type="sequence caution" evidence="6">
    <conflict type="erroneous gene model prediction">
        <sequence resource="EMBL-CDS" id="CAM13007"/>
    </conflict>
</comment>
<protein>
    <recommendedName>
        <fullName>PR domain zinc finger protein 10</fullName>
    </recommendedName>
    <alternativeName>
        <fullName>PR domain-containing protein 10</fullName>
    </alternativeName>
</protein>
<gene>
    <name type="primary">prdm10</name>
    <name type="ORF">si:ch211-151h10.3</name>
    <name type="ORF">si:dkey-11k4.2</name>
</gene>
<organism>
    <name type="scientific">Danio rerio</name>
    <name type="common">Zebrafish</name>
    <name type="synonym">Brachydanio rerio</name>
    <dbReference type="NCBI Taxonomy" id="7955"/>
    <lineage>
        <taxon>Eukaryota</taxon>
        <taxon>Metazoa</taxon>
        <taxon>Chordata</taxon>
        <taxon>Craniata</taxon>
        <taxon>Vertebrata</taxon>
        <taxon>Euteleostomi</taxon>
        <taxon>Actinopterygii</taxon>
        <taxon>Neopterygii</taxon>
        <taxon>Teleostei</taxon>
        <taxon>Ostariophysi</taxon>
        <taxon>Cypriniformes</taxon>
        <taxon>Danionidae</taxon>
        <taxon>Danioninae</taxon>
        <taxon>Danio</taxon>
    </lineage>
</organism>
<sequence>MEAKQESSTVWSTASNNDTGNTPQVHFEAGAVAQIVYSGDQSDRTQQQVVYAADGSSYTSVESAEHTLVYIHPADGTQSQLAVTNAALPTLTEASSSPLGATDSTVDSEDEEEDNDSEDSEMDDWEPRALQPFTPQNLWCEDCNNANPAACIKHGPLHPILNRPVMSKARASLPLVLYIDRFLGGVFTKRRIPKRTQFGPLEGPLVRQSELLDTHIHLKLYMLDPEKEGERAQDLWFDLSDEERCNWMMFVRPAQNHLEQNLVAYQYGSDIFYTSIKNIQPKQELKVWYAASYAEFVNQKVHDVTEEERKVLREQEKNWPCYECNRRFMSSEQLQQHLNMHDDKLNLIQRPKSRGRGRGRKRFGGARRPGRRTKFLCPQTPVESADKTQELLASVDKLQFEERTDGALNGLKVVEMAAESMETETEDALDPPPIHTESLQDEEDSVTPPPVTEIPESAKDDLSHTSPIDPHLTPQDMRRARRIRNAALKHLFIRKSFRPFKCPQCGKAFRDKEKLEQHMRFHGRDGCRHVCHQCGKGFLSSTSLEDHLVLHSDQRNYSCLFCAESYDRLELLKVHVGIHMVNGCFLCPSCKKSFTDFIQVKKHVRSFHSEKVFQCSECDKAFCRPDKLRLHMLRHSDRKDFLCSTCGKQFKRKDKLREHMQRMHNPEREAKKADRIHRTKALKQKEPTTDFESFMFKCRLCMMGFRRRGMLVNHLSKRHPEMRLEEVPELTLPIIKPNRDYYCQYCDKVYKSASKRKAHILKNHPGAELPPSIRKLRPAGPGEPDPMLSTHTQLTGTIATAPVCCPHCAKQYSSKTKMVQHIRKKHPEYQYNSSSNIQAPLAATVISSTPAVITTDGTTAEAVVTTDLLTQAMTELSQTLTTDYRTAQGDFQRIQYIPVSQAGGGLSQPQHIQLQVVQVAPASSPHSQHSTVDVSQLHDPHSYSQHSIQVQHIQVAEPTAAVQANAQVSGQPLSPSSQQAAQELSTAQLTPVTLAQQTLQTSSNQTQGATQHAYLPSNWNYRSYPSEIQMMALPHTQYVIAEASTPVTAAVNSSQVKTTHYVISDGQTELDGKQVSVPSTATQGHPDPLEQPAGGQQATTQYIITTTTNGAGASEVHITKP</sequence>
<evidence type="ECO:0000250" key="1">
    <source>
        <dbReference type="UniProtKB" id="Q3UTQ7"/>
    </source>
</evidence>
<evidence type="ECO:0000250" key="2">
    <source>
        <dbReference type="UniProtKB" id="Q9NQV6"/>
    </source>
</evidence>
<evidence type="ECO:0000255" key="3">
    <source>
        <dbReference type="PROSITE-ProRule" id="PRU00042"/>
    </source>
</evidence>
<evidence type="ECO:0000255" key="4">
    <source>
        <dbReference type="PROSITE-ProRule" id="PRU00190"/>
    </source>
</evidence>
<evidence type="ECO:0000256" key="5">
    <source>
        <dbReference type="SAM" id="MobiDB-lite"/>
    </source>
</evidence>
<evidence type="ECO:0000305" key="6"/>
<keyword id="KW-0010">Activator</keyword>
<keyword id="KW-0238">DNA-binding</keyword>
<keyword id="KW-0479">Metal-binding</keyword>
<keyword id="KW-0539">Nucleus</keyword>
<keyword id="KW-1185">Reference proteome</keyword>
<keyword id="KW-0677">Repeat</keyword>
<keyword id="KW-0804">Transcription</keyword>
<keyword id="KW-0805">Transcription regulation</keyword>
<keyword id="KW-0862">Zinc</keyword>
<keyword id="KW-0863">Zinc-finger</keyword>